<gene>
    <name evidence="8" type="primary">Pramel1</name>
</gene>
<evidence type="ECO:0000250" key="1">
    <source>
        <dbReference type="UniProtKB" id="Q3UWY1"/>
    </source>
</evidence>
<evidence type="ECO:0000269" key="2">
    <source>
    </source>
</evidence>
<evidence type="ECO:0000303" key="3">
    <source>
    </source>
</evidence>
<evidence type="ECO:0000305" key="4"/>
<evidence type="ECO:0000312" key="5">
    <source>
        <dbReference type="EMBL" id="AAI31996.1"/>
    </source>
</evidence>
<evidence type="ECO:0000312" key="6">
    <source>
        <dbReference type="EMBL" id="AAK31957.1"/>
    </source>
</evidence>
<evidence type="ECO:0000312" key="7">
    <source>
        <dbReference type="EMBL" id="EDL13429.1"/>
    </source>
</evidence>
<evidence type="ECO:0000312" key="8">
    <source>
        <dbReference type="MGI" id="MGI:1890541"/>
    </source>
</evidence>
<evidence type="ECO:0000312" key="9">
    <source>
        <dbReference type="Proteomes" id="UP000000589"/>
    </source>
</evidence>
<accession>Q99MW3</accession>
<name>PRAL1_MOUSE</name>
<reference evidence="6" key="1">
    <citation type="journal article" date="2001" name="Nat. Genet.">
        <title>An abundance of X-linked genes expressed in spermatogonia.</title>
        <authorList>
            <person name="Wang P.J."/>
            <person name="McCarrey J.R."/>
            <person name="Yang F."/>
            <person name="Page D.C."/>
        </authorList>
    </citation>
    <scope>NUCLEOTIDE SEQUENCE [MRNA]</scope>
    <source>
        <tissue evidence="6">Testis</tissue>
    </source>
</reference>
<reference evidence="9" key="2">
    <citation type="journal article" date="2009" name="PLoS Biol.">
        <title>Lineage-specific biology revealed by a finished genome assembly of the mouse.</title>
        <authorList>
            <person name="Church D.M."/>
            <person name="Goodstadt L."/>
            <person name="Hillier L.W."/>
            <person name="Zody M.C."/>
            <person name="Goldstein S."/>
            <person name="She X."/>
            <person name="Bult C.J."/>
            <person name="Agarwala R."/>
            <person name="Cherry J.L."/>
            <person name="DiCuccio M."/>
            <person name="Hlavina W."/>
            <person name="Kapustin Y."/>
            <person name="Meric P."/>
            <person name="Maglott D."/>
            <person name="Birtle Z."/>
            <person name="Marques A.C."/>
            <person name="Graves T."/>
            <person name="Zhou S."/>
            <person name="Teague B."/>
            <person name="Potamousis K."/>
            <person name="Churas C."/>
            <person name="Place M."/>
            <person name="Herschleb J."/>
            <person name="Runnheim R."/>
            <person name="Forrest D."/>
            <person name="Amos-Landgraf J."/>
            <person name="Schwartz D.C."/>
            <person name="Cheng Z."/>
            <person name="Lindblad-Toh K."/>
            <person name="Eichler E.E."/>
            <person name="Ponting C.P."/>
        </authorList>
    </citation>
    <scope>NUCLEOTIDE SEQUENCE [LARGE SCALE GENOMIC DNA]</scope>
    <source>
        <strain evidence="9">C57BL/6J</strain>
    </source>
</reference>
<reference evidence="7" key="3">
    <citation type="submission" date="2005-07" db="EMBL/GenBank/DDBJ databases">
        <authorList>
            <person name="Mural R.J."/>
            <person name="Adams M.D."/>
            <person name="Myers E.W."/>
            <person name="Smith H.O."/>
            <person name="Venter J.C."/>
        </authorList>
    </citation>
    <scope>NUCLEOTIDE SEQUENCE [LARGE SCALE GENOMIC DNA]</scope>
</reference>
<reference evidence="5" key="4">
    <citation type="journal article" date="2004" name="Genome Res.">
        <title>The status, quality, and expansion of the NIH full-length cDNA project: the Mammalian Gene Collection (MGC).</title>
        <authorList>
            <consortium name="The MGC Project Team"/>
        </authorList>
    </citation>
    <scope>NUCLEOTIDE SEQUENCE [LARGE SCALE MRNA]</scope>
    <source>
        <tissue evidence="5">Brain</tissue>
    </source>
</reference>
<reference evidence="4" key="5">
    <citation type="journal article" date="2013" name="PLoS ONE">
        <title>Differential expression of PRAMEL1, a cancer/testis antigen, during spermatogenesis in the mouse.</title>
        <authorList>
            <person name="Mistry B.V."/>
            <person name="Zhao Y."/>
            <person name="Chang T.C."/>
            <person name="Yasue H."/>
            <person name="Chiba M."/>
            <person name="Oatley J."/>
            <person name="Diaz F."/>
            <person name="Liu W.S."/>
        </authorList>
    </citation>
    <scope>FUNCTION</scope>
    <scope>SUBCELLULAR LOCATION</scope>
    <scope>TISSUE SPECIFICITY</scope>
    <scope>DEVELOPMENTAL STAGE</scope>
</reference>
<proteinExistence type="evidence at protein level"/>
<keyword id="KW-0966">Cell projection</keyword>
<keyword id="KW-0969">Cilium</keyword>
<keyword id="KW-0963">Cytoplasm</keyword>
<keyword id="KW-0968">Cytoplasmic vesicle</keyword>
<keyword id="KW-0282">Flagellum</keyword>
<keyword id="KW-0433">Leucine-rich repeat</keyword>
<keyword id="KW-1185">Reference proteome</keyword>
<keyword id="KW-0677">Repeat</keyword>
<feature type="chain" id="PRO_0000438837" description="Preferentially expressed antigen in melanoma-like protein 1">
    <location>
        <begin position="1"/>
        <end position="458"/>
    </location>
</feature>
<feature type="repeat" description="LRR 1; degenerate" evidence="1">
    <location>
        <begin position="99"/>
        <end position="126"/>
    </location>
</feature>
<feature type="repeat" description="LRR 2; degenerate" evidence="1">
    <location>
        <begin position="176"/>
        <end position="200"/>
    </location>
</feature>
<feature type="repeat" description="LRR 3; degenerate" evidence="1">
    <location>
        <begin position="201"/>
        <end position="227"/>
    </location>
</feature>
<feature type="repeat" description="LRR 4; degenerate" evidence="1">
    <location>
        <begin position="228"/>
        <end position="263"/>
    </location>
</feature>
<feature type="repeat" description="LRR 5" evidence="1">
    <location>
        <begin position="264"/>
        <end position="289"/>
    </location>
</feature>
<feature type="repeat" description="LRR 6" evidence="1">
    <location>
        <begin position="290"/>
        <end position="321"/>
    </location>
</feature>
<feature type="repeat" description="LRR 7" evidence="1">
    <location>
        <begin position="322"/>
        <end position="340"/>
    </location>
</feature>
<feature type="repeat" description="LRR 8" evidence="1">
    <location>
        <begin position="346"/>
        <end position="373"/>
    </location>
</feature>
<feature type="repeat" description="LRR 9" evidence="1">
    <location>
        <begin position="374"/>
        <end position="398"/>
    </location>
</feature>
<dbReference type="EMBL" id="AF285578">
    <property type="protein sequence ID" value="AAK31957.1"/>
    <property type="molecule type" value="mRNA"/>
</dbReference>
<dbReference type="EMBL" id="AL611930">
    <property type="status" value="NOT_ANNOTATED_CDS"/>
    <property type="molecule type" value="Genomic_DNA"/>
</dbReference>
<dbReference type="EMBL" id="CH466615">
    <property type="protein sequence ID" value="EDL13429.1"/>
    <property type="molecule type" value="Genomic_DNA"/>
</dbReference>
<dbReference type="EMBL" id="BC131995">
    <property type="protein sequence ID" value="AAI31996.1"/>
    <property type="molecule type" value="mRNA"/>
</dbReference>
<dbReference type="EMBL" id="BC132399">
    <property type="protein sequence ID" value="AAI32400.1"/>
    <property type="molecule type" value="mRNA"/>
</dbReference>
<dbReference type="CCDS" id="CCDS18888.1"/>
<dbReference type="RefSeq" id="NP_113554.1">
    <property type="nucleotide sequence ID" value="NM_031377.2"/>
</dbReference>
<dbReference type="SMR" id="Q99MW3"/>
<dbReference type="FunCoup" id="Q99MW3">
    <property type="interactions" value="5"/>
</dbReference>
<dbReference type="IntAct" id="Q99MW3">
    <property type="interactions" value="1"/>
</dbReference>
<dbReference type="STRING" id="10090.ENSMUSP00000043718"/>
<dbReference type="iPTMnet" id="Q99MW3"/>
<dbReference type="PhosphoSitePlus" id="Q99MW3"/>
<dbReference type="PaxDb" id="10090-ENSMUSP00000043718"/>
<dbReference type="ProteomicsDB" id="289833"/>
<dbReference type="Ensembl" id="ENSMUST00000037419.4">
    <property type="protein sequence ID" value="ENSMUSP00000043718.4"/>
    <property type="gene ID" value="ENSMUSG00000041805.4"/>
</dbReference>
<dbReference type="GeneID" id="83491"/>
<dbReference type="KEGG" id="mmu:83491"/>
<dbReference type="UCSC" id="uc008vqc.2">
    <property type="organism name" value="mouse"/>
</dbReference>
<dbReference type="AGR" id="MGI:1890541"/>
<dbReference type="CTD" id="83491"/>
<dbReference type="MGI" id="MGI:1890541">
    <property type="gene designation" value="Pramel1"/>
</dbReference>
<dbReference type="VEuPathDB" id="HostDB:ENSMUSG00000041805"/>
<dbReference type="eggNOG" id="ENOG502QWSJ">
    <property type="taxonomic scope" value="Eukaryota"/>
</dbReference>
<dbReference type="GeneTree" id="ENSGT01030000234531"/>
<dbReference type="HOGENOM" id="CLU_039635_2_1_1"/>
<dbReference type="InParanoid" id="Q99MW3"/>
<dbReference type="OMA" id="NIDQRCC"/>
<dbReference type="OrthoDB" id="9612370at2759"/>
<dbReference type="PhylomeDB" id="Q99MW3"/>
<dbReference type="TreeFam" id="TF332708"/>
<dbReference type="BioGRID-ORCS" id="83491">
    <property type="hits" value="2 hits in 76 CRISPR screens"/>
</dbReference>
<dbReference type="PRO" id="PR:Q99MW3"/>
<dbReference type="Proteomes" id="UP000000589">
    <property type="component" value="Chromosome 4"/>
</dbReference>
<dbReference type="RNAct" id="Q99MW3">
    <property type="molecule type" value="protein"/>
</dbReference>
<dbReference type="Bgee" id="ENSMUSG00000041805">
    <property type="expression patterns" value="Expressed in spermatid and 7 other cell types or tissues"/>
</dbReference>
<dbReference type="GO" id="GO:0001669">
    <property type="term" value="C:acrosomal vesicle"/>
    <property type="evidence" value="ECO:0000314"/>
    <property type="project" value="MGI"/>
</dbReference>
<dbReference type="GO" id="GO:0005737">
    <property type="term" value="C:cytoplasm"/>
    <property type="evidence" value="ECO:0000314"/>
    <property type="project" value="MGI"/>
</dbReference>
<dbReference type="GO" id="GO:0031514">
    <property type="term" value="C:motile cilium"/>
    <property type="evidence" value="ECO:0007669"/>
    <property type="project" value="UniProtKB-SubCell"/>
</dbReference>
<dbReference type="GO" id="GO:0043066">
    <property type="term" value="P:negative regulation of apoptotic process"/>
    <property type="evidence" value="ECO:0007669"/>
    <property type="project" value="InterPro"/>
</dbReference>
<dbReference type="GO" id="GO:0045596">
    <property type="term" value="P:negative regulation of cell differentiation"/>
    <property type="evidence" value="ECO:0007669"/>
    <property type="project" value="InterPro"/>
</dbReference>
<dbReference type="GO" id="GO:0045892">
    <property type="term" value="P:negative regulation of DNA-templated transcription"/>
    <property type="evidence" value="ECO:0007669"/>
    <property type="project" value="InterPro"/>
</dbReference>
<dbReference type="GO" id="GO:0008284">
    <property type="term" value="P:positive regulation of cell population proliferation"/>
    <property type="evidence" value="ECO:0007669"/>
    <property type="project" value="InterPro"/>
</dbReference>
<dbReference type="FunFam" id="3.80.10.10:FF:001410">
    <property type="entry name" value="PRAME family member 20"/>
    <property type="match status" value="1"/>
</dbReference>
<dbReference type="Gene3D" id="3.80.10.10">
    <property type="entry name" value="Ribonuclease Inhibitor"/>
    <property type="match status" value="1"/>
</dbReference>
<dbReference type="InterPro" id="IPR032675">
    <property type="entry name" value="LRR_dom_sf"/>
</dbReference>
<dbReference type="InterPro" id="IPR026271">
    <property type="entry name" value="PRAME"/>
</dbReference>
<dbReference type="InterPro" id="IPR050694">
    <property type="entry name" value="PRAME_domain"/>
</dbReference>
<dbReference type="PANTHER" id="PTHR14224:SF6">
    <property type="entry name" value="PREFERENTIALLY EXPRESSED ANTIGEN IN MELANOMA-LIKE PROTEIN 1"/>
    <property type="match status" value="1"/>
</dbReference>
<dbReference type="PANTHER" id="PTHR14224">
    <property type="entry name" value="SIMILAR TO PREFERENTIALLY EXPRESSED ANTIGEN IN MELANOMA-LIKE 3"/>
    <property type="match status" value="1"/>
</dbReference>
<dbReference type="PIRSF" id="PIRSF038286">
    <property type="entry name" value="PRAME"/>
    <property type="match status" value="1"/>
</dbReference>
<dbReference type="SUPFAM" id="SSF52047">
    <property type="entry name" value="RNI-like"/>
    <property type="match status" value="1"/>
</dbReference>
<organism evidence="6">
    <name type="scientific">Mus musculus</name>
    <name type="common">Mouse</name>
    <dbReference type="NCBI Taxonomy" id="10090"/>
    <lineage>
        <taxon>Eukaryota</taxon>
        <taxon>Metazoa</taxon>
        <taxon>Chordata</taxon>
        <taxon>Craniata</taxon>
        <taxon>Vertebrata</taxon>
        <taxon>Euteleostomi</taxon>
        <taxon>Mammalia</taxon>
        <taxon>Eutheria</taxon>
        <taxon>Euarchontoglires</taxon>
        <taxon>Glires</taxon>
        <taxon>Rodentia</taxon>
        <taxon>Myomorpha</taxon>
        <taxon>Muroidea</taxon>
        <taxon>Muridae</taxon>
        <taxon>Murinae</taxon>
        <taxon>Mus</taxon>
        <taxon>Mus</taxon>
    </lineage>
</organism>
<protein>
    <recommendedName>
        <fullName evidence="5">Preferentially expressed antigen in melanoma-like protein 1</fullName>
        <shortName evidence="3">Prame-like 1</shortName>
    </recommendedName>
</protein>
<comment type="function">
    <text evidence="3">May play a role in acrosome development and also in sperm maturation and motility.</text>
</comment>
<comment type="subcellular location">
    <subcellularLocation>
        <location evidence="2">Cytoplasm</location>
    </subcellularLocation>
    <subcellularLocation>
        <location evidence="2">Cytoplasmic vesicle</location>
        <location evidence="2">Secretory vesicle</location>
        <location evidence="2">Acrosome</location>
    </subcellularLocation>
    <subcellularLocation>
        <location evidence="2">Cell projection</location>
        <location evidence="2">Cilium</location>
        <location evidence="2">Flagellum</location>
    </subcellularLocation>
    <text evidence="2">Located in the cytoplasm of spermatocytes and in the acrosomal vesicle region of round, elongating and elongated spermatids. Detected in the main piece of the flagellum in testicular spermatozoa. Detected also in the connecting piece, middle piece and cytoplasmic droplets of epididymal spermatozoa.</text>
</comment>
<comment type="tissue specificity">
    <text evidence="2">Specifically expressed in testis (at protein level).</text>
</comment>
<comment type="developmental stage">
    <text evidence="2">Expressed in the spermatogenic cells during early spermatogenesis (at protein level). Expressed postnatally from week 1 onwards with a slight increase in expression levels until week 3 (at protein level).</text>
</comment>
<comment type="similarity">
    <text evidence="4">Belongs to the PRAME family.</text>
</comment>
<sequence>MSCKTPPTLQELAENSLLKNQDLAISALDDIPSLFFPSLFKKACRNRYVGIIKAMVQAWPFPCLPLGAMISRKTAYRRILEIILYGLDALLSQKVPHSRCKLQVLDLRVMPLKLWNRLPVFGTAGCSENPAVVGHSGTEVKQPVKVLVDLVLKESPLDSTESFLVQWVDNRNGLVSLCCCKLQIWAMSMYYHRKLLEILDLDSVQELRMYCISNPVCLLNFAPYLGRMRNLRCLILSHLWQTFSMTPVEKQQVITQFTSQFLKLKCLQILHLDTVFFLEGHLDELFWWLKTPLETLSVIDCNLSKSDWFHISEFQCTSQLKHLNLKWVKLTHLSPEPLRVLLLKSASTLTSLDLEGCQMMDSQLSAILPALRCCTQLTKFNFHGNYISMPILRELAYNVVKQKSQQSKIRFIPSCSHHSGLEFEAISQPHIVFVDVDRTTGEQEQVLFYAICSGEYVL</sequence>